<comment type="catalytic activity">
    <reaction evidence="1">
        <text>(S)-4-amino-5-oxopentanoate = 5-aminolevulinate</text>
        <dbReference type="Rhea" id="RHEA:14265"/>
        <dbReference type="ChEBI" id="CHEBI:57501"/>
        <dbReference type="ChEBI" id="CHEBI:356416"/>
        <dbReference type="EC" id="5.4.3.8"/>
    </reaction>
</comment>
<comment type="cofactor">
    <cofactor evidence="1">
        <name>pyridoxal 5'-phosphate</name>
        <dbReference type="ChEBI" id="CHEBI:597326"/>
    </cofactor>
</comment>
<comment type="pathway">
    <text evidence="1">Porphyrin-containing compound metabolism; protoporphyrin-IX biosynthesis; 5-aminolevulinate from L-glutamyl-tRNA(Glu): step 2/2.</text>
</comment>
<comment type="subunit">
    <text evidence="1">Homodimer.</text>
</comment>
<comment type="subcellular location">
    <subcellularLocation>
        <location evidence="1">Cytoplasm</location>
    </subcellularLocation>
</comment>
<comment type="similarity">
    <text evidence="1">Belongs to the class-III pyridoxal-phosphate-dependent aminotransferase family. HemL subfamily.</text>
</comment>
<dbReference type="EC" id="5.4.3.8" evidence="1"/>
<dbReference type="EMBL" id="AE017355">
    <property type="protein sequence ID" value="AAT62336.1"/>
    <property type="molecule type" value="Genomic_DNA"/>
</dbReference>
<dbReference type="RefSeq" id="WP_011181462.1">
    <property type="nucleotide sequence ID" value="NC_005957.1"/>
</dbReference>
<dbReference type="RefSeq" id="YP_034792.1">
    <property type="nucleotide sequence ID" value="NC_005957.1"/>
</dbReference>
<dbReference type="SMR" id="Q6HNS8"/>
<dbReference type="KEGG" id="btk:BT9727_0442"/>
<dbReference type="PATRIC" id="fig|281309.8.peg.472"/>
<dbReference type="HOGENOM" id="CLU_016922_1_5_9"/>
<dbReference type="UniPathway" id="UPA00251">
    <property type="reaction ID" value="UER00317"/>
</dbReference>
<dbReference type="Proteomes" id="UP000001301">
    <property type="component" value="Chromosome"/>
</dbReference>
<dbReference type="GO" id="GO:0005737">
    <property type="term" value="C:cytoplasm"/>
    <property type="evidence" value="ECO:0007669"/>
    <property type="project" value="UniProtKB-SubCell"/>
</dbReference>
<dbReference type="GO" id="GO:0042286">
    <property type="term" value="F:glutamate-1-semialdehyde 2,1-aminomutase activity"/>
    <property type="evidence" value="ECO:0007669"/>
    <property type="project" value="UniProtKB-UniRule"/>
</dbReference>
<dbReference type="GO" id="GO:0030170">
    <property type="term" value="F:pyridoxal phosphate binding"/>
    <property type="evidence" value="ECO:0007669"/>
    <property type="project" value="InterPro"/>
</dbReference>
<dbReference type="GO" id="GO:0008483">
    <property type="term" value="F:transaminase activity"/>
    <property type="evidence" value="ECO:0007669"/>
    <property type="project" value="InterPro"/>
</dbReference>
<dbReference type="GO" id="GO:0006782">
    <property type="term" value="P:protoporphyrinogen IX biosynthetic process"/>
    <property type="evidence" value="ECO:0007669"/>
    <property type="project" value="UniProtKB-UniRule"/>
</dbReference>
<dbReference type="CDD" id="cd00610">
    <property type="entry name" value="OAT_like"/>
    <property type="match status" value="1"/>
</dbReference>
<dbReference type="FunFam" id="3.40.640.10:FF:000021">
    <property type="entry name" value="Glutamate-1-semialdehyde 2,1-aminomutase"/>
    <property type="match status" value="1"/>
</dbReference>
<dbReference type="Gene3D" id="3.90.1150.10">
    <property type="entry name" value="Aspartate Aminotransferase, domain 1"/>
    <property type="match status" value="1"/>
</dbReference>
<dbReference type="Gene3D" id="3.40.640.10">
    <property type="entry name" value="Type I PLP-dependent aspartate aminotransferase-like (Major domain)"/>
    <property type="match status" value="1"/>
</dbReference>
<dbReference type="HAMAP" id="MF_00375">
    <property type="entry name" value="HemL_aminotrans_3"/>
    <property type="match status" value="1"/>
</dbReference>
<dbReference type="InterPro" id="IPR004639">
    <property type="entry name" value="4pyrrol_synth_GluAld_NH2Trfase"/>
</dbReference>
<dbReference type="InterPro" id="IPR005814">
    <property type="entry name" value="Aminotrans_3"/>
</dbReference>
<dbReference type="InterPro" id="IPR049704">
    <property type="entry name" value="Aminotrans_3_PPA_site"/>
</dbReference>
<dbReference type="InterPro" id="IPR015424">
    <property type="entry name" value="PyrdxlP-dep_Trfase"/>
</dbReference>
<dbReference type="InterPro" id="IPR015421">
    <property type="entry name" value="PyrdxlP-dep_Trfase_major"/>
</dbReference>
<dbReference type="InterPro" id="IPR015422">
    <property type="entry name" value="PyrdxlP-dep_Trfase_small"/>
</dbReference>
<dbReference type="NCBIfam" id="TIGR00713">
    <property type="entry name" value="hemL"/>
    <property type="match status" value="1"/>
</dbReference>
<dbReference type="NCBIfam" id="NF000818">
    <property type="entry name" value="PRK00062.1"/>
    <property type="match status" value="1"/>
</dbReference>
<dbReference type="NCBIfam" id="NF009055">
    <property type="entry name" value="PRK12389.1"/>
    <property type="match status" value="1"/>
</dbReference>
<dbReference type="PANTHER" id="PTHR43713">
    <property type="entry name" value="GLUTAMATE-1-SEMIALDEHYDE 2,1-AMINOMUTASE"/>
    <property type="match status" value="1"/>
</dbReference>
<dbReference type="PANTHER" id="PTHR43713:SF1">
    <property type="entry name" value="GLUTAMATE-1-SEMIALDEHYDE 2,1-AMINOMUTASE 2"/>
    <property type="match status" value="1"/>
</dbReference>
<dbReference type="Pfam" id="PF00202">
    <property type="entry name" value="Aminotran_3"/>
    <property type="match status" value="1"/>
</dbReference>
<dbReference type="SUPFAM" id="SSF53383">
    <property type="entry name" value="PLP-dependent transferases"/>
    <property type="match status" value="1"/>
</dbReference>
<dbReference type="PROSITE" id="PS00600">
    <property type="entry name" value="AA_TRANSFER_CLASS_3"/>
    <property type="match status" value="1"/>
</dbReference>
<accession>Q6HNS8</accession>
<evidence type="ECO:0000255" key="1">
    <source>
        <dbReference type="HAMAP-Rule" id="MF_00375"/>
    </source>
</evidence>
<organism>
    <name type="scientific">Bacillus thuringiensis subsp. konkukian (strain 97-27)</name>
    <dbReference type="NCBI Taxonomy" id="281309"/>
    <lineage>
        <taxon>Bacteria</taxon>
        <taxon>Bacillati</taxon>
        <taxon>Bacillota</taxon>
        <taxon>Bacilli</taxon>
        <taxon>Bacillales</taxon>
        <taxon>Bacillaceae</taxon>
        <taxon>Bacillus</taxon>
        <taxon>Bacillus cereus group</taxon>
    </lineage>
</organism>
<name>GSA1_BACHK</name>
<proteinExistence type="inferred from homology"/>
<sequence>MVVEFTKSEALHKEALEHIVGGVNSPSRSFKAVGGGAPVAMERGKGAYFWDVDGNKYIDYLAAYGPIITGHAHPHITKAITTAAENGVLYGTPTALEVKFAKMLKEAMPALDKVRFVNSGTEAVMTTIRVARAYTGRTKIMKFAGCYHGHSDLVLVAAGSGPSTLGTPDSAGVPQSIAQEVITVPFNNVETLKEALDKWGHEVAAILVEPIVGNFGIVEPKPGFLEKVNELVHEAGALVIYDEVITAFRFMYGGAQDLLGVTPDLTALGKVIGGGLPIGAYGGKKEIMEQVAPLGPAYQAGTMAGNPASMASGIACLEVLQQEGLYEKLDELGAMLEKGILEQAAKHNIDITLNRLKGALTVYFTTNTIENYDAAQDTDGEMFGKFFKLMLQEGVNLAPSKYEAWFLTTEHTKEDIEYTIEAVGRAFAALADNK</sequence>
<feature type="chain" id="PRO_0000243548" description="Glutamate-1-semialdehyde 2,1-aminomutase 1">
    <location>
        <begin position="1"/>
        <end position="434"/>
    </location>
</feature>
<feature type="modified residue" description="N6-(pyridoxal phosphate)lysine" evidence="1">
    <location>
        <position position="270"/>
    </location>
</feature>
<protein>
    <recommendedName>
        <fullName evidence="1">Glutamate-1-semialdehyde 2,1-aminomutase 1</fullName>
        <shortName evidence="1">GSA 1</shortName>
        <ecNumber evidence="1">5.4.3.8</ecNumber>
    </recommendedName>
    <alternativeName>
        <fullName evidence="1">Glutamate-1-semialdehyde aminotransferase 1</fullName>
        <shortName evidence="1">GSA-AT 1</shortName>
    </alternativeName>
</protein>
<gene>
    <name evidence="1" type="primary">hemL1</name>
    <name type="ordered locus">BT9727_0442</name>
</gene>
<reference key="1">
    <citation type="journal article" date="2006" name="J. Bacteriol.">
        <title>Pathogenomic sequence analysis of Bacillus cereus and Bacillus thuringiensis isolates closely related to Bacillus anthracis.</title>
        <authorList>
            <person name="Han C.S."/>
            <person name="Xie G."/>
            <person name="Challacombe J.F."/>
            <person name="Altherr M.R."/>
            <person name="Bhotika S.S."/>
            <person name="Bruce D."/>
            <person name="Campbell C.S."/>
            <person name="Campbell M.L."/>
            <person name="Chen J."/>
            <person name="Chertkov O."/>
            <person name="Cleland C."/>
            <person name="Dimitrijevic M."/>
            <person name="Doggett N.A."/>
            <person name="Fawcett J.J."/>
            <person name="Glavina T."/>
            <person name="Goodwin L.A."/>
            <person name="Hill K.K."/>
            <person name="Hitchcock P."/>
            <person name="Jackson P.J."/>
            <person name="Keim P."/>
            <person name="Kewalramani A.R."/>
            <person name="Longmire J."/>
            <person name="Lucas S."/>
            <person name="Malfatti S."/>
            <person name="McMurry K."/>
            <person name="Meincke L.J."/>
            <person name="Misra M."/>
            <person name="Moseman B.L."/>
            <person name="Mundt M."/>
            <person name="Munk A.C."/>
            <person name="Okinaka R.T."/>
            <person name="Parson-Quintana B."/>
            <person name="Reilly L.P."/>
            <person name="Richardson P."/>
            <person name="Robinson D.L."/>
            <person name="Rubin E."/>
            <person name="Saunders E."/>
            <person name="Tapia R."/>
            <person name="Tesmer J.G."/>
            <person name="Thayer N."/>
            <person name="Thompson L.S."/>
            <person name="Tice H."/>
            <person name="Ticknor L.O."/>
            <person name="Wills P.L."/>
            <person name="Brettin T.S."/>
            <person name="Gilna P."/>
        </authorList>
    </citation>
    <scope>NUCLEOTIDE SEQUENCE [LARGE SCALE GENOMIC DNA]</scope>
    <source>
        <strain>97-27</strain>
    </source>
</reference>
<keyword id="KW-0963">Cytoplasm</keyword>
<keyword id="KW-0413">Isomerase</keyword>
<keyword id="KW-0627">Porphyrin biosynthesis</keyword>
<keyword id="KW-0663">Pyridoxal phosphate</keyword>